<reference key="1">
    <citation type="journal article" date="2022" name="J. Infect. Dis.">
        <title>Exportation of Monkeypox virus from the African continent.</title>
        <authorList>
            <person name="Mauldin M.R."/>
            <person name="McCollum A.M."/>
            <person name="Nakazawa Y.J."/>
            <person name="Mandra A."/>
            <person name="Whitehouse E.R."/>
            <person name="Davidson W."/>
            <person name="Zhao H."/>
            <person name="Gao J."/>
            <person name="Li Y."/>
            <person name="Doty J."/>
            <person name="Yinka-Ogunleye A."/>
            <person name="Akinpelu A."/>
            <person name="Aruna O."/>
            <person name="Naidoo D."/>
            <person name="Lewandowski K."/>
            <person name="Afrough B."/>
            <person name="Graham V."/>
            <person name="Aarons E."/>
            <person name="Hewson R."/>
            <person name="Vipond R."/>
            <person name="Dunning J."/>
            <person name="Chand M."/>
            <person name="Brown C."/>
            <person name="Cohen-Gihon I."/>
            <person name="Erez N."/>
            <person name="Shifman O."/>
            <person name="Israeli O."/>
            <person name="Sharon M."/>
            <person name="Schwartz E."/>
            <person name="Beth-Din A."/>
            <person name="Zvi A."/>
            <person name="Mak T.M."/>
            <person name="Ng Y.K."/>
            <person name="Cui L."/>
            <person name="Lin R.T.P."/>
            <person name="Olson V.A."/>
            <person name="Brooks T."/>
            <person name="Paran N."/>
            <person name="Ihekweazu C."/>
            <person name="Reynolds M.G."/>
        </authorList>
    </citation>
    <scope>NUCLEOTIDE SEQUENCE [LARGE SCALE GENOMIC DNA]</scope>
    <source>
        <strain>MPXV-M5312_HM12_Rivers</strain>
    </source>
</reference>
<name>PG108_MONPV</name>
<gene>
    <name type="primary">OPG108</name>
    <name type="ORF">MPXVgp093</name>
</gene>
<comment type="function">
    <text evidence="1 2">Envelope protein that binds to heparan sulfate on the cell surface and might provide virion attachment to target cell.</text>
</comment>
<comment type="subcellular location">
    <subcellularLocation>
        <location evidence="2">Virion membrane</location>
        <topology evidence="2">Single-pass membrane protein</topology>
    </subcellularLocation>
    <text evidence="2">Component of the mature virion (MV) membrane. Becomes membrane associated presumably during virus maturation. The mature virion is located in the cytoplasm of infected cells and is probably released by cell lysis.</text>
</comment>
<comment type="induction">
    <text>Expressed in the late phase of the viral replicative cycle.</text>
</comment>
<comment type="PTM">
    <text evidence="2">Does not contain disulfide bonds.</text>
</comment>
<comment type="similarity">
    <text evidence="4">Belongs to the orthopoxvirus OPG108 family.</text>
</comment>
<feature type="chain" id="PRO_0000457424" description="Envelope protein OPG108">
    <location>
        <begin position="1"/>
        <end position="324"/>
    </location>
</feature>
<feature type="transmembrane region" description="Helical" evidence="3">
    <location>
        <begin position="285"/>
        <end position="305"/>
    </location>
</feature>
<organismHost>
    <name type="scientific">Cynomys gunnisoni</name>
    <name type="common">Gunnison's prairie dog</name>
    <name type="synonym">Spermophilus gunnisoni</name>
    <dbReference type="NCBI Taxonomy" id="45479"/>
</organismHost>
<organismHost>
    <name type="scientific">Cynomys leucurus</name>
    <name type="common">White-tailed prairie dog</name>
    <dbReference type="NCBI Taxonomy" id="99825"/>
</organismHost>
<organismHost>
    <name type="scientific">Cynomys ludovicianus</name>
    <name type="common">Black-tailed prairie dog</name>
    <dbReference type="NCBI Taxonomy" id="45480"/>
</organismHost>
<organismHost>
    <name type="scientific">Cynomys mexicanus</name>
    <name type="common">Mexican prairie dog</name>
    <dbReference type="NCBI Taxonomy" id="99826"/>
</organismHost>
<organismHost>
    <name type="scientific">Cynomys parvidens</name>
    <name type="common">Utah prairie dog</name>
    <dbReference type="NCBI Taxonomy" id="99827"/>
</organismHost>
<organismHost>
    <name type="scientific">Gliridae</name>
    <name type="common">dormice</name>
    <dbReference type="NCBI Taxonomy" id="30650"/>
</organismHost>
<organismHost>
    <name type="scientific">Heliosciurus ruwenzorii</name>
    <name type="common">Ruwenzori sun squirrel</name>
    <dbReference type="NCBI Taxonomy" id="226685"/>
</organismHost>
<organismHost>
    <name type="scientific">Homo sapiens</name>
    <name type="common">Human</name>
    <dbReference type="NCBI Taxonomy" id="9606"/>
</organismHost>
<organismHost>
    <name type="scientific">Mus musculus</name>
    <name type="common">Mouse</name>
    <dbReference type="NCBI Taxonomy" id="10090"/>
</organismHost>
<sequence>MAAVKTPVIVVPVIDRPPSETFPNVHEHINDQKFDDVKDNEVMQEKRDVVIVNDDPDHYKDYVFIQWTGGNIRDDDKYTHFFSGFCNTMCTEETKRNIARHLALWDSKFFTELENKNVEYVVIIENDNVIEDITFLRPVLKAIHDKKIDILQMREIITGNKVKTELVIDKDHAIFTYTGGYDVSLSAYIIRVTTALNIVDEIIKSGGLSSGFYFEIARIENEMKINRQIMDNSAKYVEHDPRLVAEHRFETMKPNFWSRIGTVAAKRYPGVMYTFTTPLISFFGLFDINVIGLIVILFIMFMLIFNVKSKLLWFLTGTFVTAFI</sequence>
<proteinExistence type="evidence at transcript level"/>
<accession>A0A7H0DN80</accession>
<evidence type="ECO:0000250" key="1"/>
<evidence type="ECO:0000250" key="2">
    <source>
        <dbReference type="UniProtKB" id="P07240"/>
    </source>
</evidence>
<evidence type="ECO:0000255" key="3"/>
<evidence type="ECO:0000305" key="4"/>
<organism>
    <name type="scientific">Monkeypox virus</name>
    <dbReference type="NCBI Taxonomy" id="10244"/>
    <lineage>
        <taxon>Viruses</taxon>
        <taxon>Varidnaviria</taxon>
        <taxon>Bamfordvirae</taxon>
        <taxon>Nucleocytoviricota</taxon>
        <taxon>Pokkesviricetes</taxon>
        <taxon>Chitovirales</taxon>
        <taxon>Poxviridae</taxon>
        <taxon>Chordopoxvirinae</taxon>
        <taxon>Orthopoxvirus</taxon>
    </lineage>
</organism>
<keyword id="KW-0945">Host-virus interaction</keyword>
<keyword id="KW-0426">Late protein</keyword>
<keyword id="KW-0472">Membrane</keyword>
<keyword id="KW-1185">Reference proteome</keyword>
<keyword id="KW-0812">Transmembrane</keyword>
<keyword id="KW-1133">Transmembrane helix</keyword>
<keyword id="KW-1161">Viral attachment to host cell</keyword>
<keyword id="KW-0261">Viral envelope protein</keyword>
<keyword id="KW-0946">Virion</keyword>
<keyword id="KW-1160">Virus entry into host cell</keyword>
<dbReference type="EMBL" id="MT903340">
    <property type="protein sequence ID" value="QNP12963.1"/>
    <property type="molecule type" value="Genomic_DNA"/>
</dbReference>
<dbReference type="RefSeq" id="YP_010377090.1">
    <property type="nucleotide sequence ID" value="NC_063383.1"/>
</dbReference>
<dbReference type="SMR" id="A0A7H0DN80"/>
<dbReference type="GeneID" id="72551503"/>
<dbReference type="Proteomes" id="UP000516359">
    <property type="component" value="Genome"/>
</dbReference>
<dbReference type="GO" id="GO:0016020">
    <property type="term" value="C:membrane"/>
    <property type="evidence" value="ECO:0007669"/>
    <property type="project" value="UniProtKB-KW"/>
</dbReference>
<dbReference type="GO" id="GO:0019031">
    <property type="term" value="C:viral envelope"/>
    <property type="evidence" value="ECO:0007669"/>
    <property type="project" value="UniProtKB-KW"/>
</dbReference>
<dbReference type="GO" id="GO:0055036">
    <property type="term" value="C:virion membrane"/>
    <property type="evidence" value="ECO:0007669"/>
    <property type="project" value="UniProtKB-SubCell"/>
</dbReference>
<dbReference type="GO" id="GO:0046718">
    <property type="term" value="P:symbiont entry into host cell"/>
    <property type="evidence" value="ECO:0007669"/>
    <property type="project" value="UniProtKB-KW"/>
</dbReference>
<dbReference type="GO" id="GO:0019062">
    <property type="term" value="P:virion attachment to host cell"/>
    <property type="evidence" value="ECO:0007669"/>
    <property type="project" value="UniProtKB-KW"/>
</dbReference>
<dbReference type="InterPro" id="IPR004900">
    <property type="entry name" value="Poxvirus_P35"/>
</dbReference>
<dbReference type="Pfam" id="PF03213">
    <property type="entry name" value="Pox_P35"/>
    <property type="match status" value="1"/>
</dbReference>
<protein>
    <recommendedName>
        <fullName>Envelope protein OPG108</fullName>
    </recommendedName>
</protein>